<accession>Q57RF9</accession>
<name>UVRB_SALCH</name>
<proteinExistence type="inferred from homology"/>
<dbReference type="EMBL" id="AE017220">
    <property type="protein sequence ID" value="AAX64702.1"/>
    <property type="molecule type" value="Genomic_DNA"/>
</dbReference>
<dbReference type="RefSeq" id="WP_000042502.1">
    <property type="nucleotide sequence ID" value="NC_006905.1"/>
</dbReference>
<dbReference type="SMR" id="Q57RF9"/>
<dbReference type="KEGG" id="sec:SCH_0796"/>
<dbReference type="HOGENOM" id="CLU_009621_2_1_6"/>
<dbReference type="Proteomes" id="UP000000538">
    <property type="component" value="Chromosome"/>
</dbReference>
<dbReference type="GO" id="GO:0005737">
    <property type="term" value="C:cytoplasm"/>
    <property type="evidence" value="ECO:0007669"/>
    <property type="project" value="UniProtKB-SubCell"/>
</dbReference>
<dbReference type="GO" id="GO:0009380">
    <property type="term" value="C:excinuclease repair complex"/>
    <property type="evidence" value="ECO:0007669"/>
    <property type="project" value="InterPro"/>
</dbReference>
<dbReference type="GO" id="GO:0005524">
    <property type="term" value="F:ATP binding"/>
    <property type="evidence" value="ECO:0007669"/>
    <property type="project" value="UniProtKB-UniRule"/>
</dbReference>
<dbReference type="GO" id="GO:0016887">
    <property type="term" value="F:ATP hydrolysis activity"/>
    <property type="evidence" value="ECO:0007669"/>
    <property type="project" value="InterPro"/>
</dbReference>
<dbReference type="GO" id="GO:0003677">
    <property type="term" value="F:DNA binding"/>
    <property type="evidence" value="ECO:0007669"/>
    <property type="project" value="UniProtKB-UniRule"/>
</dbReference>
<dbReference type="GO" id="GO:0009381">
    <property type="term" value="F:excinuclease ABC activity"/>
    <property type="evidence" value="ECO:0007669"/>
    <property type="project" value="UniProtKB-UniRule"/>
</dbReference>
<dbReference type="GO" id="GO:0006289">
    <property type="term" value="P:nucleotide-excision repair"/>
    <property type="evidence" value="ECO:0007669"/>
    <property type="project" value="UniProtKB-UniRule"/>
</dbReference>
<dbReference type="GO" id="GO:0009432">
    <property type="term" value="P:SOS response"/>
    <property type="evidence" value="ECO:0007669"/>
    <property type="project" value="UniProtKB-UniRule"/>
</dbReference>
<dbReference type="CDD" id="cd17916">
    <property type="entry name" value="DEXHc_UvrB"/>
    <property type="match status" value="1"/>
</dbReference>
<dbReference type="CDD" id="cd18790">
    <property type="entry name" value="SF2_C_UvrB"/>
    <property type="match status" value="1"/>
</dbReference>
<dbReference type="FunFam" id="3.40.50.300:FF:000257">
    <property type="entry name" value="UvrABC system protein B"/>
    <property type="match status" value="1"/>
</dbReference>
<dbReference type="FunFam" id="3.40.50.300:FF:000401">
    <property type="entry name" value="UvrABC system protein B"/>
    <property type="match status" value="1"/>
</dbReference>
<dbReference type="FunFam" id="3.40.50.300:FF:000477">
    <property type="entry name" value="UvrABC system protein B"/>
    <property type="match status" value="1"/>
</dbReference>
<dbReference type="Gene3D" id="6.10.140.240">
    <property type="match status" value="1"/>
</dbReference>
<dbReference type="Gene3D" id="3.40.50.300">
    <property type="entry name" value="P-loop containing nucleotide triphosphate hydrolases"/>
    <property type="match status" value="3"/>
</dbReference>
<dbReference type="Gene3D" id="4.10.860.10">
    <property type="entry name" value="UVR domain"/>
    <property type="match status" value="1"/>
</dbReference>
<dbReference type="HAMAP" id="MF_00204">
    <property type="entry name" value="UvrB"/>
    <property type="match status" value="1"/>
</dbReference>
<dbReference type="InterPro" id="IPR006935">
    <property type="entry name" value="Helicase/UvrB_N"/>
</dbReference>
<dbReference type="InterPro" id="IPR014001">
    <property type="entry name" value="Helicase_ATP-bd"/>
</dbReference>
<dbReference type="InterPro" id="IPR001650">
    <property type="entry name" value="Helicase_C-like"/>
</dbReference>
<dbReference type="InterPro" id="IPR027417">
    <property type="entry name" value="P-loop_NTPase"/>
</dbReference>
<dbReference type="InterPro" id="IPR001943">
    <property type="entry name" value="UVR_dom"/>
</dbReference>
<dbReference type="InterPro" id="IPR036876">
    <property type="entry name" value="UVR_dom_sf"/>
</dbReference>
<dbReference type="InterPro" id="IPR004807">
    <property type="entry name" value="UvrB"/>
</dbReference>
<dbReference type="InterPro" id="IPR041471">
    <property type="entry name" value="UvrB_inter"/>
</dbReference>
<dbReference type="InterPro" id="IPR024759">
    <property type="entry name" value="UvrB_YAD/RRR_dom"/>
</dbReference>
<dbReference type="NCBIfam" id="NF003673">
    <property type="entry name" value="PRK05298.1"/>
    <property type="match status" value="1"/>
</dbReference>
<dbReference type="NCBIfam" id="TIGR00631">
    <property type="entry name" value="uvrb"/>
    <property type="match status" value="1"/>
</dbReference>
<dbReference type="PANTHER" id="PTHR24029">
    <property type="entry name" value="UVRABC SYSTEM PROTEIN B"/>
    <property type="match status" value="1"/>
</dbReference>
<dbReference type="PANTHER" id="PTHR24029:SF0">
    <property type="entry name" value="UVRABC SYSTEM PROTEIN B"/>
    <property type="match status" value="1"/>
</dbReference>
<dbReference type="Pfam" id="PF00271">
    <property type="entry name" value="Helicase_C"/>
    <property type="match status" value="1"/>
</dbReference>
<dbReference type="Pfam" id="PF04851">
    <property type="entry name" value="ResIII"/>
    <property type="match status" value="1"/>
</dbReference>
<dbReference type="Pfam" id="PF02151">
    <property type="entry name" value="UVR"/>
    <property type="match status" value="1"/>
</dbReference>
<dbReference type="Pfam" id="PF12344">
    <property type="entry name" value="UvrB"/>
    <property type="match status" value="1"/>
</dbReference>
<dbReference type="Pfam" id="PF17757">
    <property type="entry name" value="UvrB_inter"/>
    <property type="match status" value="1"/>
</dbReference>
<dbReference type="SMART" id="SM00487">
    <property type="entry name" value="DEXDc"/>
    <property type="match status" value="1"/>
</dbReference>
<dbReference type="SMART" id="SM00490">
    <property type="entry name" value="HELICc"/>
    <property type="match status" value="1"/>
</dbReference>
<dbReference type="SUPFAM" id="SSF46600">
    <property type="entry name" value="C-terminal UvrC-binding domain of UvrB"/>
    <property type="match status" value="1"/>
</dbReference>
<dbReference type="SUPFAM" id="SSF52540">
    <property type="entry name" value="P-loop containing nucleoside triphosphate hydrolases"/>
    <property type="match status" value="2"/>
</dbReference>
<dbReference type="PROSITE" id="PS51192">
    <property type="entry name" value="HELICASE_ATP_BIND_1"/>
    <property type="match status" value="1"/>
</dbReference>
<dbReference type="PROSITE" id="PS51194">
    <property type="entry name" value="HELICASE_CTER"/>
    <property type="match status" value="1"/>
</dbReference>
<dbReference type="PROSITE" id="PS50151">
    <property type="entry name" value="UVR"/>
    <property type="match status" value="1"/>
</dbReference>
<keyword id="KW-0067">ATP-binding</keyword>
<keyword id="KW-0963">Cytoplasm</keyword>
<keyword id="KW-0227">DNA damage</keyword>
<keyword id="KW-0228">DNA excision</keyword>
<keyword id="KW-0234">DNA repair</keyword>
<keyword id="KW-0267">Excision nuclease</keyword>
<keyword id="KW-0547">Nucleotide-binding</keyword>
<keyword id="KW-0742">SOS response</keyword>
<feature type="chain" id="PRO_0000227357" description="UvrABC system protein B">
    <location>
        <begin position="1"/>
        <end position="673"/>
    </location>
</feature>
<feature type="domain" description="Helicase ATP-binding" evidence="1">
    <location>
        <begin position="26"/>
        <end position="414"/>
    </location>
</feature>
<feature type="domain" description="Helicase C-terminal" evidence="1">
    <location>
        <begin position="431"/>
        <end position="597"/>
    </location>
</feature>
<feature type="domain" description="UVR" evidence="1">
    <location>
        <begin position="633"/>
        <end position="668"/>
    </location>
</feature>
<feature type="short sequence motif" description="Beta-hairpin">
    <location>
        <begin position="92"/>
        <end position="115"/>
    </location>
</feature>
<feature type="binding site" evidence="1">
    <location>
        <begin position="39"/>
        <end position="46"/>
    </location>
    <ligand>
        <name>ATP</name>
        <dbReference type="ChEBI" id="CHEBI:30616"/>
    </ligand>
</feature>
<protein>
    <recommendedName>
        <fullName evidence="1">UvrABC system protein B</fullName>
        <shortName evidence="1">Protein UvrB</shortName>
    </recommendedName>
    <alternativeName>
        <fullName evidence="1">Excinuclease ABC subunit B</fullName>
    </alternativeName>
</protein>
<comment type="function">
    <text evidence="1">The UvrABC repair system catalyzes the recognition and processing of DNA lesions. A damage recognition complex composed of 2 UvrA and 2 UvrB subunits scans DNA for abnormalities. Upon binding of the UvrA(2)B(2) complex to a putative damaged site, the DNA wraps around one UvrB monomer. DNA wrap is dependent on ATP binding by UvrB and probably causes local melting of the DNA helix, facilitating insertion of UvrB beta-hairpin between the DNA strands. Then UvrB probes one DNA strand for the presence of a lesion. If a lesion is found the UvrA subunits dissociate and the UvrB-DNA preincision complex is formed. This complex is subsequently bound by UvrC and the second UvrB is released. If no lesion is found, the DNA wraps around the other UvrB subunit that will check the other stand for damage.</text>
</comment>
<comment type="subunit">
    <text evidence="1">Forms a heterotetramer with UvrA during the search for lesions. Interacts with UvrC in an incision complex.</text>
</comment>
<comment type="subcellular location">
    <subcellularLocation>
        <location evidence="1">Cytoplasm</location>
    </subcellularLocation>
</comment>
<comment type="domain">
    <text evidence="1">The beta-hairpin motif is involved in DNA binding.</text>
</comment>
<comment type="similarity">
    <text evidence="1">Belongs to the UvrB family.</text>
</comment>
<evidence type="ECO:0000255" key="1">
    <source>
        <dbReference type="HAMAP-Rule" id="MF_00204"/>
    </source>
</evidence>
<sequence>MSKPFKLNSAFKPSGDQPDAIRRLEEGLEDGLAHQTLLGVTGSGKTFTIANVIADLQRPTMVLAPNKTLAAQLYGEMKEFFPENAVEYFVSYYDYYQPEAYVPSSDTFIEKDASVNEHIEQMRLSATKALLERRDVVVVASVSAIYGLGDPDLYLKMMLHLTVGMLIDQRAILRRLAELQYTRNDQAFQRGTFRVRGEVIDIFPAESDDIALRVELFDEEVERLSLFDPLTGQVESTVPRYTIYPKTHYVTPRERILQAMEEIKDELADRRKVLLANNKLLEEQRLSQRTQFDLEMMNELGYCSGIENYSRFLSGRGPGEPPPTLFDYLPADGLLVVDESHVTIPQIGGMYRGDRARKETLVEYGFRLPSALDNRPLKFEEFEALAPQTIYVSATPGNYELEKSGDEVVDQVVRPTGLLDPIIEVRPVATQVDDLLSEIRQRAAINERVLVTTLTKRMAEDLTEYLEEHGERVRYLHSDIDTVERMEIIRDLRLGEFDVLVGINLLREGLDMPEVSLVAILDADKEGFLRSERSLIQTIGRAARNVNGKAILYGDKITPSMAKAIGETERRREKQQKYNEEHGITPQGLNKKVVDILALGQNIAKTKAKGKGKGRSTAKAGIVELDMTPKALQQKIHELEGQMMQHAQNLEFEEAAQIRDQLHQLRELFIAAS</sequence>
<gene>
    <name evidence="1" type="primary">uvrB</name>
    <name type="ordered locus">SCH_0796</name>
</gene>
<reference key="1">
    <citation type="journal article" date="2005" name="Nucleic Acids Res.">
        <title>The genome sequence of Salmonella enterica serovar Choleraesuis, a highly invasive and resistant zoonotic pathogen.</title>
        <authorList>
            <person name="Chiu C.-H."/>
            <person name="Tang P."/>
            <person name="Chu C."/>
            <person name="Hu S."/>
            <person name="Bao Q."/>
            <person name="Yu J."/>
            <person name="Chou Y.-Y."/>
            <person name="Wang H.-S."/>
            <person name="Lee Y.-S."/>
        </authorList>
    </citation>
    <scope>NUCLEOTIDE SEQUENCE [LARGE SCALE GENOMIC DNA]</scope>
    <source>
        <strain>SC-B67</strain>
    </source>
</reference>
<organism>
    <name type="scientific">Salmonella choleraesuis (strain SC-B67)</name>
    <dbReference type="NCBI Taxonomy" id="321314"/>
    <lineage>
        <taxon>Bacteria</taxon>
        <taxon>Pseudomonadati</taxon>
        <taxon>Pseudomonadota</taxon>
        <taxon>Gammaproteobacteria</taxon>
        <taxon>Enterobacterales</taxon>
        <taxon>Enterobacteriaceae</taxon>
        <taxon>Salmonella</taxon>
    </lineage>
</organism>